<evidence type="ECO:0000255" key="1">
    <source>
        <dbReference type="HAMAP-Rule" id="MF_00711"/>
    </source>
</evidence>
<feature type="chain" id="PRO_1000045629" description="Glycine dehydrogenase (decarboxylating)">
    <location>
        <begin position="1"/>
        <end position="959"/>
    </location>
</feature>
<feature type="modified residue" description="N6-(pyridoxal phosphate)lysine" evidence="1">
    <location>
        <position position="708"/>
    </location>
</feature>
<keyword id="KW-0560">Oxidoreductase</keyword>
<keyword id="KW-0663">Pyridoxal phosphate</keyword>
<dbReference type="EC" id="1.4.4.2" evidence="1"/>
<dbReference type="EMBL" id="AM286415">
    <property type="protein sequence ID" value="CAL13417.1"/>
    <property type="molecule type" value="Genomic_DNA"/>
</dbReference>
<dbReference type="RefSeq" id="WP_011817028.1">
    <property type="nucleotide sequence ID" value="NC_008800.1"/>
</dbReference>
<dbReference type="RefSeq" id="YP_001007560.1">
    <property type="nucleotide sequence ID" value="NC_008800.1"/>
</dbReference>
<dbReference type="SMR" id="A1JPN3"/>
<dbReference type="KEGG" id="yen:YE3391"/>
<dbReference type="PATRIC" id="fig|393305.7.peg.3601"/>
<dbReference type="eggNOG" id="COG0403">
    <property type="taxonomic scope" value="Bacteria"/>
</dbReference>
<dbReference type="eggNOG" id="COG1003">
    <property type="taxonomic scope" value="Bacteria"/>
</dbReference>
<dbReference type="HOGENOM" id="CLU_004620_3_2_6"/>
<dbReference type="OrthoDB" id="9801272at2"/>
<dbReference type="Proteomes" id="UP000000642">
    <property type="component" value="Chromosome"/>
</dbReference>
<dbReference type="GO" id="GO:0005829">
    <property type="term" value="C:cytosol"/>
    <property type="evidence" value="ECO:0007669"/>
    <property type="project" value="TreeGrafter"/>
</dbReference>
<dbReference type="GO" id="GO:0005960">
    <property type="term" value="C:glycine cleavage complex"/>
    <property type="evidence" value="ECO:0007669"/>
    <property type="project" value="TreeGrafter"/>
</dbReference>
<dbReference type="GO" id="GO:0016594">
    <property type="term" value="F:glycine binding"/>
    <property type="evidence" value="ECO:0007669"/>
    <property type="project" value="TreeGrafter"/>
</dbReference>
<dbReference type="GO" id="GO:0004375">
    <property type="term" value="F:glycine dehydrogenase (decarboxylating) activity"/>
    <property type="evidence" value="ECO:0007669"/>
    <property type="project" value="UniProtKB-EC"/>
</dbReference>
<dbReference type="GO" id="GO:0030170">
    <property type="term" value="F:pyridoxal phosphate binding"/>
    <property type="evidence" value="ECO:0007669"/>
    <property type="project" value="TreeGrafter"/>
</dbReference>
<dbReference type="GO" id="GO:0019464">
    <property type="term" value="P:glycine decarboxylation via glycine cleavage system"/>
    <property type="evidence" value="ECO:0007669"/>
    <property type="project" value="UniProtKB-UniRule"/>
</dbReference>
<dbReference type="CDD" id="cd00613">
    <property type="entry name" value="GDC-P"/>
    <property type="match status" value="2"/>
</dbReference>
<dbReference type="FunFam" id="3.40.640.10:FF:000005">
    <property type="entry name" value="Glycine dehydrogenase (decarboxylating), mitochondrial"/>
    <property type="match status" value="1"/>
</dbReference>
<dbReference type="FunFam" id="3.90.1150.10:FF:000007">
    <property type="entry name" value="Glycine dehydrogenase (decarboxylating), mitochondrial"/>
    <property type="match status" value="1"/>
</dbReference>
<dbReference type="FunFam" id="3.40.640.10:FF:000007">
    <property type="entry name" value="glycine dehydrogenase (Decarboxylating), mitochondrial"/>
    <property type="match status" value="1"/>
</dbReference>
<dbReference type="Gene3D" id="3.90.1150.10">
    <property type="entry name" value="Aspartate Aminotransferase, domain 1"/>
    <property type="match status" value="2"/>
</dbReference>
<dbReference type="Gene3D" id="3.40.640.10">
    <property type="entry name" value="Type I PLP-dependent aspartate aminotransferase-like (Major domain)"/>
    <property type="match status" value="2"/>
</dbReference>
<dbReference type="HAMAP" id="MF_00711">
    <property type="entry name" value="GcvP"/>
    <property type="match status" value="1"/>
</dbReference>
<dbReference type="InterPro" id="IPR003437">
    <property type="entry name" value="GcvP"/>
</dbReference>
<dbReference type="InterPro" id="IPR049316">
    <property type="entry name" value="GDC-P_C"/>
</dbReference>
<dbReference type="InterPro" id="IPR049315">
    <property type="entry name" value="GDC-P_N"/>
</dbReference>
<dbReference type="InterPro" id="IPR020581">
    <property type="entry name" value="GDC_P"/>
</dbReference>
<dbReference type="InterPro" id="IPR015424">
    <property type="entry name" value="PyrdxlP-dep_Trfase"/>
</dbReference>
<dbReference type="InterPro" id="IPR015421">
    <property type="entry name" value="PyrdxlP-dep_Trfase_major"/>
</dbReference>
<dbReference type="InterPro" id="IPR015422">
    <property type="entry name" value="PyrdxlP-dep_Trfase_small"/>
</dbReference>
<dbReference type="NCBIfam" id="TIGR00461">
    <property type="entry name" value="gcvP"/>
    <property type="match status" value="1"/>
</dbReference>
<dbReference type="NCBIfam" id="NF003346">
    <property type="entry name" value="PRK04366.1"/>
    <property type="match status" value="1"/>
</dbReference>
<dbReference type="PANTHER" id="PTHR11773:SF13">
    <property type="entry name" value="GLYCINE DEHYDROGENASE (DECARBOXYLATING)"/>
    <property type="match status" value="1"/>
</dbReference>
<dbReference type="PANTHER" id="PTHR11773">
    <property type="entry name" value="GLYCINE DEHYDROGENASE, DECARBOXYLATING"/>
    <property type="match status" value="1"/>
</dbReference>
<dbReference type="Pfam" id="PF21478">
    <property type="entry name" value="GcvP2_C"/>
    <property type="match status" value="1"/>
</dbReference>
<dbReference type="Pfam" id="PF02347">
    <property type="entry name" value="GDC-P"/>
    <property type="match status" value="2"/>
</dbReference>
<dbReference type="SUPFAM" id="SSF53383">
    <property type="entry name" value="PLP-dependent transferases"/>
    <property type="match status" value="2"/>
</dbReference>
<proteinExistence type="inferred from homology"/>
<protein>
    <recommendedName>
        <fullName evidence="1">Glycine dehydrogenase (decarboxylating)</fullName>
        <ecNumber evidence="1">1.4.4.2</ecNumber>
    </recommendedName>
    <alternativeName>
        <fullName evidence="1">Glycine cleavage system P-protein</fullName>
    </alternativeName>
    <alternativeName>
        <fullName evidence="1">Glycine decarboxylase</fullName>
    </alternativeName>
    <alternativeName>
        <fullName evidence="1">Glycine dehydrogenase (aminomethyl-transferring)</fullName>
    </alternativeName>
</protein>
<accession>A1JPN3</accession>
<name>GCSP_YERE8</name>
<reference key="1">
    <citation type="journal article" date="2006" name="PLoS Genet.">
        <title>The complete genome sequence and comparative genome analysis of the high pathogenicity Yersinia enterocolitica strain 8081.</title>
        <authorList>
            <person name="Thomson N.R."/>
            <person name="Howard S."/>
            <person name="Wren B.W."/>
            <person name="Holden M.T.G."/>
            <person name="Crossman L."/>
            <person name="Challis G.L."/>
            <person name="Churcher C."/>
            <person name="Mungall K."/>
            <person name="Brooks K."/>
            <person name="Chillingworth T."/>
            <person name="Feltwell T."/>
            <person name="Abdellah Z."/>
            <person name="Hauser H."/>
            <person name="Jagels K."/>
            <person name="Maddison M."/>
            <person name="Moule S."/>
            <person name="Sanders M."/>
            <person name="Whitehead S."/>
            <person name="Quail M.A."/>
            <person name="Dougan G."/>
            <person name="Parkhill J."/>
            <person name="Prentice M.B."/>
        </authorList>
    </citation>
    <scope>NUCLEOTIDE SEQUENCE [LARGE SCALE GENOMIC DNA]</scope>
    <source>
        <strain>NCTC 13174 / 8081</strain>
    </source>
</reference>
<sequence>MTQNLSQLEHNDAFIQRHIGSSAEQQQQMLAAVGANSLSTLIQQIVPADIQLPSPPPVGEAATEHQALAELKGIASQNQRYKSYIGMGYSPVLTPPVILRNMLENPGWYTAYTPYQPEVSQGRLEALLNFQQLTQDLTGLDLASASLLDEATAAAESMALAKRASKLKDANRFFVADDVHPQTLDVVLTRAETFGFEVIVDRAEKVLELDGVFGVLLQQVGTTGELHDYSALLAELKKRKIITSVAADIMALVLLTAPGKQGADVVFGSAQRFGVPMGYGGPHAAFFACRDEFKRSMPGRIIGVSRDAAGNTALRMAMQTREQHIRREKANSNICTSQVLLANIASLYAVYHGPQGLQRIAGRIHRMTDILAAGLQQAGLALRFTHWFDTLTVEVKDKAAVLARALSFGINLRTDIHGAVGITLDETTSREDLQILFTLLVGDNHGLDIDLLDAKVSQNSQSIQTGMLRQEPILTHPVFNRYHSETEMMRYMHRLERKDLALNQAMIPLGSCTMKLNAAAEMIPITWPEFAELHPFCPPEQAAGYQQMIGQLSQWLVQLTGYDAVCMQPNSGAQGEYAGLLAIRRYHESRNQASRHICLIPSSAHGTNPASAQMAGMSVVVVACDKQGNIDLHDLRQKAGEAGDELSCIMVTYPSTHGVYEETIREVCQIVHQFGGQVYLDGANMNAQVGITTPGYIGADVSHLNLHKTFCIPHGGGGPGMGPIGVKAHLAPFVPGHSVVQIDGMTTQQGAVSAAPFGSASILPISWMYIRMMGADGLKQASQVAILNANYIATRLKEAYPVLYTGHDGSVAHECILDIRPLKEATGISEMDIAKRLIDFGFHAPTMSFPVAGTLMVEPTESESKVELDRFIDAMLAIRAEIEKVARGEWPLEDNPLVNAPHTQAELVGEWQHPYSRELAVFPVAGVMENKYWPSVKRLDDVYGDRNLFCSCVPISDYE</sequence>
<comment type="function">
    <text evidence="1">The glycine cleavage system catalyzes the degradation of glycine. The P protein binds the alpha-amino group of glycine through its pyridoxal phosphate cofactor; CO(2) is released and the remaining methylamine moiety is then transferred to the lipoamide cofactor of the H protein.</text>
</comment>
<comment type="catalytic activity">
    <reaction evidence="1">
        <text>N(6)-[(R)-lipoyl]-L-lysyl-[glycine-cleavage complex H protein] + glycine + H(+) = N(6)-[(R)-S(8)-aminomethyldihydrolipoyl]-L-lysyl-[glycine-cleavage complex H protein] + CO2</text>
        <dbReference type="Rhea" id="RHEA:24304"/>
        <dbReference type="Rhea" id="RHEA-COMP:10494"/>
        <dbReference type="Rhea" id="RHEA-COMP:10495"/>
        <dbReference type="ChEBI" id="CHEBI:15378"/>
        <dbReference type="ChEBI" id="CHEBI:16526"/>
        <dbReference type="ChEBI" id="CHEBI:57305"/>
        <dbReference type="ChEBI" id="CHEBI:83099"/>
        <dbReference type="ChEBI" id="CHEBI:83143"/>
        <dbReference type="EC" id="1.4.4.2"/>
    </reaction>
</comment>
<comment type="cofactor">
    <cofactor evidence="1">
        <name>pyridoxal 5'-phosphate</name>
        <dbReference type="ChEBI" id="CHEBI:597326"/>
    </cofactor>
</comment>
<comment type="subunit">
    <text evidence="1">The glycine cleavage system is composed of four proteins: P, T, L and H.</text>
</comment>
<comment type="similarity">
    <text evidence="1">Belongs to the GcvP family.</text>
</comment>
<gene>
    <name evidence="1" type="primary">gcvP</name>
    <name type="ordered locus">YE3391</name>
</gene>
<organism>
    <name type="scientific">Yersinia enterocolitica serotype O:8 / biotype 1B (strain NCTC 13174 / 8081)</name>
    <dbReference type="NCBI Taxonomy" id="393305"/>
    <lineage>
        <taxon>Bacteria</taxon>
        <taxon>Pseudomonadati</taxon>
        <taxon>Pseudomonadota</taxon>
        <taxon>Gammaproteobacteria</taxon>
        <taxon>Enterobacterales</taxon>
        <taxon>Yersiniaceae</taxon>
        <taxon>Yersinia</taxon>
    </lineage>
</organism>